<dbReference type="PIR" id="A01406">
    <property type="entry name" value="SWFGS"/>
</dbReference>
<dbReference type="SMR" id="P01144"/>
<dbReference type="GO" id="GO:0005576">
    <property type="term" value="C:extracellular region"/>
    <property type="evidence" value="ECO:0007669"/>
    <property type="project" value="UniProtKB-SubCell"/>
</dbReference>
<dbReference type="GO" id="GO:0005179">
    <property type="term" value="F:hormone activity"/>
    <property type="evidence" value="ECO:0007669"/>
    <property type="project" value="UniProtKB-KW"/>
</dbReference>
<dbReference type="Gene3D" id="6.10.250.1920">
    <property type="match status" value="1"/>
</dbReference>
<dbReference type="InterPro" id="IPR018446">
    <property type="entry name" value="Corticotropin-releasing_fac_CS"/>
</dbReference>
<dbReference type="InterPro" id="IPR000187">
    <property type="entry name" value="CRF"/>
</dbReference>
<dbReference type="InterPro" id="IPR003620">
    <property type="entry name" value="Urocortin_CRF"/>
</dbReference>
<dbReference type="PANTHER" id="PTHR15035">
    <property type="entry name" value="CORTICOLIBERIN/UROCORTIN"/>
    <property type="match status" value="1"/>
</dbReference>
<dbReference type="PANTHER" id="PTHR15035:SF11">
    <property type="entry name" value="UROCORTIN"/>
    <property type="match status" value="1"/>
</dbReference>
<dbReference type="Pfam" id="PF00473">
    <property type="entry name" value="CRF"/>
    <property type="match status" value="1"/>
</dbReference>
<dbReference type="PRINTS" id="PR01612">
    <property type="entry name" value="CRFFAMILY"/>
</dbReference>
<dbReference type="SMART" id="SM00039">
    <property type="entry name" value="CRF"/>
    <property type="match status" value="1"/>
</dbReference>
<dbReference type="PROSITE" id="PS00511">
    <property type="entry name" value="CRF"/>
    <property type="match status" value="1"/>
</dbReference>
<name>SAUV_PHYSA</name>
<keyword id="KW-0027">Amidation</keyword>
<keyword id="KW-0903">Direct protein sequencing</keyword>
<keyword id="KW-0372">Hormone</keyword>
<keyword id="KW-0873">Pyrrolidone carboxylic acid</keyword>
<keyword id="KW-0964">Secreted</keyword>
<reference key="1">
    <citation type="journal article" date="1979" name="Hoppe-Seyler's Z. Physiol. Chem.">
        <title>Structure of sauvagine, a vasoactive peptide from the skin of a frog.</title>
        <authorList>
            <person name="Montecucchi P.C."/>
            <person name="Henschen A."/>
            <person name="Erspamer V."/>
        </authorList>
    </citation>
    <scope>PRELIMINARY PROTEIN SEQUENCE</scope>
    <source>
        <tissue>Skin secretion</tissue>
    </source>
</reference>
<reference key="2">
    <citation type="journal article" date="1981" name="Int. J. Pept. Protein Res.">
        <title>Amino acid composition and sequence analysis of sauvagine, a new active peptide from the skin of Phyllomedusa sauvagei.</title>
        <authorList>
            <person name="Montecucchi P.C."/>
            <person name="Anastasi A."/>
            <person name="de Castiglione R."/>
            <person name="Erspamer V."/>
        </authorList>
    </citation>
    <scope>PROTEIN SEQUENCE</scope>
    <scope>PYROGLUTAMATE FORMATION AT GLN-1</scope>
    <scope>AMIDATION AT ILE-40</scope>
    <source>
        <tissue>Skin secretion</tissue>
    </source>
</reference>
<reference key="3">
    <citation type="journal article" date="1982" name="Int. J. Pept. Protein Res.">
        <title>Primary structure of sauvagine.</title>
        <authorList>
            <person name="Montecucchi P.C."/>
            <person name="Henschen A."/>
        </authorList>
    </citation>
    <scope>PROTEIN SEQUENCE</scope>
    <source>
        <tissue>Skin secretion</tissue>
    </source>
</reference>
<reference key="4">
    <citation type="journal article" date="1988" name="Chem. Pharm. Bull.">
        <title>Studies on peptides. CLVII. Synthesis of frog-skin peptide, sauvagine.</title>
        <authorList>
            <person name="Nomizu M."/>
            <person name="Akaji K."/>
            <person name="Fukata J."/>
            <person name="Imura H."/>
            <person name="Inoue A."/>
            <person name="Nakata Y."/>
            <person name="Segawa T."/>
            <person name="Fujii N."/>
            <person name="Yajima H."/>
        </authorList>
    </citation>
    <scope>SYNTHESIS</scope>
</reference>
<reference key="5">
    <citation type="journal article" date="1982" name="Int. J. Pept. Protein Res.">
        <title>Secondary structure prediction of sauvagine, a novel biologically active polypeptide from a frog.</title>
        <authorList>
            <person name="Montecucchi P.C."/>
            <person name="Gozzini L."/>
        </authorList>
    </citation>
    <scope>SECONDARY STRUCTURE PREDICTION</scope>
</reference>
<protein>
    <recommendedName>
        <fullName>Sauvagin</fullName>
    </recommendedName>
    <alternativeName>
        <fullName>Sauvagine</fullName>
        <shortName>SVG</shortName>
    </alternativeName>
</protein>
<accession>P01144</accession>
<sequence length="40" mass="4617">QGPPISIDLSLELLRKMIEIEKQEKEKQQAANNRLLLDTI</sequence>
<feature type="peptide" id="PRO_0000044693" description="Sauvagin">
    <location>
        <begin position="1"/>
        <end position="40"/>
    </location>
</feature>
<feature type="modified residue" description="Pyrrolidone carboxylic acid" evidence="1">
    <location>
        <position position="1"/>
    </location>
</feature>
<feature type="modified residue" description="Isoleucine amide" evidence="1">
    <location>
        <position position="40"/>
    </location>
</feature>
<comment type="function">
    <text>Hypotensive and diuretic peptide.</text>
</comment>
<comment type="subcellular location">
    <subcellularLocation>
        <location>Secreted</location>
    </subcellularLocation>
</comment>
<comment type="similarity">
    <text evidence="2">Belongs to the sauvagine/corticotropin-releasing factor/urotensin I family.</text>
</comment>
<organism>
    <name type="scientific">Phyllomedusa sauvagei</name>
    <name type="common">Sauvage's leaf frog</name>
    <dbReference type="NCBI Taxonomy" id="8395"/>
    <lineage>
        <taxon>Eukaryota</taxon>
        <taxon>Metazoa</taxon>
        <taxon>Chordata</taxon>
        <taxon>Craniata</taxon>
        <taxon>Vertebrata</taxon>
        <taxon>Euteleostomi</taxon>
        <taxon>Amphibia</taxon>
        <taxon>Batrachia</taxon>
        <taxon>Anura</taxon>
        <taxon>Neobatrachia</taxon>
        <taxon>Hyloidea</taxon>
        <taxon>Hylidae</taxon>
        <taxon>Phyllomedusinae</taxon>
        <taxon>Phyllomedusa</taxon>
    </lineage>
</organism>
<evidence type="ECO:0000269" key="1">
    <source>
    </source>
</evidence>
<evidence type="ECO:0000305" key="2"/>
<proteinExistence type="evidence at protein level"/>